<proteinExistence type="inferred from homology"/>
<reference key="1">
    <citation type="journal article" date="2002" name="Lancet">
        <title>Genome and virulence determinants of high virulence community-acquired MRSA.</title>
        <authorList>
            <person name="Baba T."/>
            <person name="Takeuchi F."/>
            <person name="Kuroda M."/>
            <person name="Yuzawa H."/>
            <person name="Aoki K."/>
            <person name="Oguchi A."/>
            <person name="Nagai Y."/>
            <person name="Iwama N."/>
            <person name="Asano K."/>
            <person name="Naimi T."/>
            <person name="Kuroda H."/>
            <person name="Cui L."/>
            <person name="Yamamoto K."/>
            <person name="Hiramatsu K."/>
        </authorList>
    </citation>
    <scope>NUCLEOTIDE SEQUENCE [LARGE SCALE GENOMIC DNA]</scope>
    <source>
        <strain>MW2</strain>
    </source>
</reference>
<organism>
    <name type="scientific">Staphylococcus aureus (strain MW2)</name>
    <dbReference type="NCBI Taxonomy" id="196620"/>
    <lineage>
        <taxon>Bacteria</taxon>
        <taxon>Bacillati</taxon>
        <taxon>Bacillota</taxon>
        <taxon>Bacilli</taxon>
        <taxon>Bacillales</taxon>
        <taxon>Staphylococcaceae</taxon>
        <taxon>Staphylococcus</taxon>
    </lineage>
</organism>
<sequence>MTEFDLSTREGRWKHFGSVDPIEGTKPTTKNEMTDLQSTHKDFLFEIEEVGIKNLVYPVLVDQYQTAGTFSFSTSLTKDEKGINMSRIIESVEKHYDNGIELEFNTLYQVLRTLQTNMKQNAAGVDVSGKWFFDRYSPTTNIKAVGNADVTYGLAIDGDKVTRKELTIEATVTTLCPCSKEISEYSAHNQRGVVTVKTYINKDQDIVDDYKNKILDAMEANASSILYPILKRPDEKRVTERAYENPRFVEDLIRLIAADLVEFDWLDGFDIECRNEESIHQHDAFAKLKYRK</sequence>
<keyword id="KW-0378">Hydrolase</keyword>
<name>GCH4_STAAW</name>
<dbReference type="EC" id="3.5.4.16" evidence="1"/>
<dbReference type="EMBL" id="BA000033">
    <property type="protein sequence ID" value="BAB94386.1"/>
    <property type="molecule type" value="Genomic_DNA"/>
</dbReference>
<dbReference type="RefSeq" id="WP_000134232.1">
    <property type="nucleotide sequence ID" value="NC_003923.1"/>
</dbReference>
<dbReference type="SMR" id="Q8NXX2"/>
<dbReference type="KEGG" id="sam:MW0521"/>
<dbReference type="HOGENOM" id="CLU_062816_1_1_9"/>
<dbReference type="UniPathway" id="UPA00848">
    <property type="reaction ID" value="UER00151"/>
</dbReference>
<dbReference type="GO" id="GO:0003934">
    <property type="term" value="F:GTP cyclohydrolase I activity"/>
    <property type="evidence" value="ECO:0007669"/>
    <property type="project" value="UniProtKB-UniRule"/>
</dbReference>
<dbReference type="GO" id="GO:0046654">
    <property type="term" value="P:tetrahydrofolate biosynthetic process"/>
    <property type="evidence" value="ECO:0007669"/>
    <property type="project" value="UniProtKB-UniRule"/>
</dbReference>
<dbReference type="Gene3D" id="3.10.270.10">
    <property type="entry name" value="Urate Oxidase"/>
    <property type="match status" value="1"/>
</dbReference>
<dbReference type="HAMAP" id="MF_01527_B">
    <property type="entry name" value="GTP_cyclohydrol_B"/>
    <property type="match status" value="1"/>
</dbReference>
<dbReference type="InterPro" id="IPR022838">
    <property type="entry name" value="GTP_cyclohydrolase_FolE2"/>
</dbReference>
<dbReference type="InterPro" id="IPR003801">
    <property type="entry name" value="GTP_cyclohydrolase_FolE2/MptA"/>
</dbReference>
<dbReference type="NCBIfam" id="NF010200">
    <property type="entry name" value="PRK13674.1-1"/>
    <property type="match status" value="1"/>
</dbReference>
<dbReference type="PANTHER" id="PTHR36445">
    <property type="entry name" value="GTP CYCLOHYDROLASE MPTA"/>
    <property type="match status" value="1"/>
</dbReference>
<dbReference type="PANTHER" id="PTHR36445:SF1">
    <property type="entry name" value="GTP CYCLOHYDROLASE MPTA"/>
    <property type="match status" value="1"/>
</dbReference>
<dbReference type="Pfam" id="PF02649">
    <property type="entry name" value="GCHY-1"/>
    <property type="match status" value="1"/>
</dbReference>
<feature type="chain" id="PRO_0000147729" description="GTP cyclohydrolase FolE2">
    <location>
        <begin position="1"/>
        <end position="292"/>
    </location>
</feature>
<feature type="site" description="May be catalytically important" evidence="1">
    <location>
        <position position="176"/>
    </location>
</feature>
<accession>Q8NXX2</accession>
<evidence type="ECO:0000255" key="1">
    <source>
        <dbReference type="HAMAP-Rule" id="MF_01527"/>
    </source>
</evidence>
<protein>
    <recommendedName>
        <fullName evidence="1">GTP cyclohydrolase FolE2</fullName>
        <ecNumber evidence="1">3.5.4.16</ecNumber>
    </recommendedName>
</protein>
<gene>
    <name evidence="1" type="primary">folE2</name>
    <name type="ordered locus">MW0521</name>
</gene>
<comment type="function">
    <text evidence="1">Converts GTP to 7,8-dihydroneopterin triphosphate.</text>
</comment>
<comment type="catalytic activity">
    <reaction evidence="1">
        <text>GTP + H2O = 7,8-dihydroneopterin 3'-triphosphate + formate + H(+)</text>
        <dbReference type="Rhea" id="RHEA:17473"/>
        <dbReference type="ChEBI" id="CHEBI:15377"/>
        <dbReference type="ChEBI" id="CHEBI:15378"/>
        <dbReference type="ChEBI" id="CHEBI:15740"/>
        <dbReference type="ChEBI" id="CHEBI:37565"/>
        <dbReference type="ChEBI" id="CHEBI:58462"/>
        <dbReference type="EC" id="3.5.4.16"/>
    </reaction>
</comment>
<comment type="pathway">
    <text evidence="1">Cofactor biosynthesis; 7,8-dihydroneopterin triphosphate biosynthesis; 7,8-dihydroneopterin triphosphate from GTP: step 1/1.</text>
</comment>
<comment type="similarity">
    <text evidence="1">Belongs to the GTP cyclohydrolase IV family.</text>
</comment>